<gene>
    <name evidence="1" type="primary">rpsH</name>
    <name type="ordered locus">RAF_ORF0898</name>
</gene>
<organism>
    <name type="scientific">Rickettsia africae (strain ESF-5)</name>
    <dbReference type="NCBI Taxonomy" id="347255"/>
    <lineage>
        <taxon>Bacteria</taxon>
        <taxon>Pseudomonadati</taxon>
        <taxon>Pseudomonadota</taxon>
        <taxon>Alphaproteobacteria</taxon>
        <taxon>Rickettsiales</taxon>
        <taxon>Rickettsiaceae</taxon>
        <taxon>Rickettsieae</taxon>
        <taxon>Rickettsia</taxon>
        <taxon>spotted fever group</taxon>
    </lineage>
</organism>
<keyword id="KW-0687">Ribonucleoprotein</keyword>
<keyword id="KW-0689">Ribosomal protein</keyword>
<keyword id="KW-0694">RNA-binding</keyword>
<keyword id="KW-0699">rRNA-binding</keyword>
<proteinExistence type="inferred from homology"/>
<protein>
    <recommendedName>
        <fullName evidence="1">Small ribosomal subunit protein uS8</fullName>
    </recommendedName>
    <alternativeName>
        <fullName evidence="2">30S ribosomal protein S8</fullName>
    </alternativeName>
</protein>
<comment type="function">
    <text evidence="1">One of the primary rRNA binding proteins, it binds directly to 16S rRNA central domain where it helps coordinate assembly of the platform of the 30S subunit.</text>
</comment>
<comment type="subunit">
    <text evidence="1">Part of the 30S ribosomal subunit. Contacts proteins S5 and S12.</text>
</comment>
<comment type="similarity">
    <text evidence="1">Belongs to the universal ribosomal protein uS8 family.</text>
</comment>
<dbReference type="EMBL" id="CP001612">
    <property type="protein sequence ID" value="ACP53753.1"/>
    <property type="molecule type" value="Genomic_DNA"/>
</dbReference>
<dbReference type="RefSeq" id="WP_010977581.1">
    <property type="nucleotide sequence ID" value="NC_012633.1"/>
</dbReference>
<dbReference type="SMR" id="C3PP93"/>
<dbReference type="GeneID" id="95361472"/>
<dbReference type="KEGG" id="raf:RAF_ORF0898"/>
<dbReference type="HOGENOM" id="CLU_098428_0_0_5"/>
<dbReference type="Proteomes" id="UP000002305">
    <property type="component" value="Chromosome"/>
</dbReference>
<dbReference type="GO" id="GO:1990904">
    <property type="term" value="C:ribonucleoprotein complex"/>
    <property type="evidence" value="ECO:0007669"/>
    <property type="project" value="UniProtKB-KW"/>
</dbReference>
<dbReference type="GO" id="GO:0005840">
    <property type="term" value="C:ribosome"/>
    <property type="evidence" value="ECO:0007669"/>
    <property type="project" value="UniProtKB-KW"/>
</dbReference>
<dbReference type="GO" id="GO:0019843">
    <property type="term" value="F:rRNA binding"/>
    <property type="evidence" value="ECO:0007669"/>
    <property type="project" value="UniProtKB-UniRule"/>
</dbReference>
<dbReference type="GO" id="GO:0003735">
    <property type="term" value="F:structural constituent of ribosome"/>
    <property type="evidence" value="ECO:0007669"/>
    <property type="project" value="InterPro"/>
</dbReference>
<dbReference type="GO" id="GO:0006412">
    <property type="term" value="P:translation"/>
    <property type="evidence" value="ECO:0007669"/>
    <property type="project" value="UniProtKB-UniRule"/>
</dbReference>
<dbReference type="FunFam" id="3.30.1370.30:FF:000002">
    <property type="entry name" value="30S ribosomal protein S8"/>
    <property type="match status" value="1"/>
</dbReference>
<dbReference type="FunFam" id="3.30.1490.10:FF:000001">
    <property type="entry name" value="30S ribosomal protein S8"/>
    <property type="match status" value="1"/>
</dbReference>
<dbReference type="Gene3D" id="3.30.1370.30">
    <property type="match status" value="1"/>
</dbReference>
<dbReference type="Gene3D" id="3.30.1490.10">
    <property type="match status" value="1"/>
</dbReference>
<dbReference type="HAMAP" id="MF_01302_B">
    <property type="entry name" value="Ribosomal_uS8_B"/>
    <property type="match status" value="1"/>
</dbReference>
<dbReference type="InterPro" id="IPR000630">
    <property type="entry name" value="Ribosomal_uS8"/>
</dbReference>
<dbReference type="InterPro" id="IPR047863">
    <property type="entry name" value="Ribosomal_uS8_CS"/>
</dbReference>
<dbReference type="InterPro" id="IPR035987">
    <property type="entry name" value="Ribosomal_uS8_sf"/>
</dbReference>
<dbReference type="NCBIfam" id="NF001109">
    <property type="entry name" value="PRK00136.1"/>
    <property type="match status" value="1"/>
</dbReference>
<dbReference type="PANTHER" id="PTHR11758">
    <property type="entry name" value="40S RIBOSOMAL PROTEIN S15A"/>
    <property type="match status" value="1"/>
</dbReference>
<dbReference type="Pfam" id="PF00410">
    <property type="entry name" value="Ribosomal_S8"/>
    <property type="match status" value="1"/>
</dbReference>
<dbReference type="SUPFAM" id="SSF56047">
    <property type="entry name" value="Ribosomal protein S8"/>
    <property type="match status" value="1"/>
</dbReference>
<dbReference type="PROSITE" id="PS00053">
    <property type="entry name" value="RIBOSOMAL_S8"/>
    <property type="match status" value="1"/>
</dbReference>
<sequence>MSMTDNVADMLTRIRNAYKSKLINVSFPSSKIKTSILDVLQKEGYIKDYITTQKNNISYTEVALKYSVNGDASICEIHRVSKPGKRVYSAIKDLKGYYNNMGIYILSTPYGVMSDREAHIKNVGGEVICKVF</sequence>
<name>RS8_RICAE</name>
<reference key="1">
    <citation type="journal article" date="2009" name="BMC Genomics">
        <title>Analysis of the Rickettsia africae genome reveals that virulence acquisition in Rickettsia species may be explained by genome reduction.</title>
        <authorList>
            <person name="Fournier P.-E."/>
            <person name="El Karkouri K."/>
            <person name="Leroy Q."/>
            <person name="Robert C."/>
            <person name="Giumelli B."/>
            <person name="Renesto P."/>
            <person name="Socolovschi C."/>
            <person name="Parola P."/>
            <person name="Audic S."/>
            <person name="Raoult D."/>
        </authorList>
    </citation>
    <scope>NUCLEOTIDE SEQUENCE [LARGE SCALE GENOMIC DNA]</scope>
    <source>
        <strain>ESF-5</strain>
    </source>
</reference>
<feature type="chain" id="PRO_1000214263" description="Small ribosomal subunit protein uS8">
    <location>
        <begin position="1"/>
        <end position="132"/>
    </location>
</feature>
<accession>C3PP93</accession>
<evidence type="ECO:0000255" key="1">
    <source>
        <dbReference type="HAMAP-Rule" id="MF_01302"/>
    </source>
</evidence>
<evidence type="ECO:0000305" key="2"/>